<proteinExistence type="evidence at protein level"/>
<name>MYB1R_BETVU</name>
<sequence length="225" mass="26294">MYQQNSETGSLGRVVKGSWSDEEDDLLRKCIQKYGEGNWKRVPERAGLNRCRKSCRWRWLNYLKPSIKRGHFNEDEVKFIIQQHKLLGNRWSLIAAKLPGRTINDVKNYCNTHLYKKHSIENIPAPATNTMTHNTSSCVDRPESSATIKEPKWWENILVELQREEKEGKSQNCSGLDFEQDNLGQQDPNINDGMDQWLNSLKEVPNLSYQWEENLLDFDVVNLWA</sequence>
<dbReference type="EMBL" id="JF432080">
    <property type="protein sequence ID" value="AET43457.1"/>
    <property type="molecule type" value="mRNA"/>
</dbReference>
<dbReference type="SMR" id="M1ETA5"/>
<dbReference type="GO" id="GO:0005634">
    <property type="term" value="C:nucleus"/>
    <property type="evidence" value="ECO:0007669"/>
    <property type="project" value="UniProtKB-SubCell"/>
</dbReference>
<dbReference type="GO" id="GO:0003677">
    <property type="term" value="F:DNA binding"/>
    <property type="evidence" value="ECO:0007669"/>
    <property type="project" value="UniProtKB-KW"/>
</dbReference>
<dbReference type="CDD" id="cd00167">
    <property type="entry name" value="SANT"/>
    <property type="match status" value="2"/>
</dbReference>
<dbReference type="FunFam" id="1.10.10.60:FF:000218">
    <property type="entry name" value="Myb transcription factor"/>
    <property type="match status" value="1"/>
</dbReference>
<dbReference type="Gene3D" id="1.10.10.60">
    <property type="entry name" value="Homeodomain-like"/>
    <property type="match status" value="2"/>
</dbReference>
<dbReference type="InterPro" id="IPR009057">
    <property type="entry name" value="Homeodomain-like_sf"/>
</dbReference>
<dbReference type="InterPro" id="IPR017930">
    <property type="entry name" value="Myb_dom"/>
</dbReference>
<dbReference type="InterPro" id="IPR015495">
    <property type="entry name" value="Myb_TF_plants"/>
</dbReference>
<dbReference type="InterPro" id="IPR001005">
    <property type="entry name" value="SANT/Myb"/>
</dbReference>
<dbReference type="PANTHER" id="PTHR47999">
    <property type="entry name" value="TRANSCRIPTION FACTOR MYB8-RELATED-RELATED"/>
    <property type="match status" value="1"/>
</dbReference>
<dbReference type="PANTHER" id="PTHR47999:SF24">
    <property type="entry name" value="TRANSCRIPTION FACTOR MYB90"/>
    <property type="match status" value="1"/>
</dbReference>
<dbReference type="Pfam" id="PF00249">
    <property type="entry name" value="Myb_DNA-binding"/>
    <property type="match status" value="2"/>
</dbReference>
<dbReference type="SMART" id="SM00717">
    <property type="entry name" value="SANT"/>
    <property type="match status" value="2"/>
</dbReference>
<dbReference type="SUPFAM" id="SSF46689">
    <property type="entry name" value="Homeodomain-like"/>
    <property type="match status" value="1"/>
</dbReference>
<dbReference type="PROSITE" id="PS51294">
    <property type="entry name" value="HTH_MYB"/>
    <property type="match status" value="2"/>
</dbReference>
<gene>
    <name evidence="4" type="primary">MYB1</name>
    <name evidence="3" type="synonym">Bv2g027795_jkkr</name>
    <name evidence="3" type="synonym">Bv_jkkr</name>
</gene>
<reference key="1">
    <citation type="journal article" date="2015" name="Nat. Genet.">
        <title>The beet Y locus encodes an anthocyanin MYB-like protein that activates the betalain red pigment pathway.</title>
        <authorList>
            <person name="Hatlestad G.J."/>
            <person name="Akhavan N.A."/>
            <person name="Sunnadeniya R.M."/>
            <person name="Elam L."/>
            <person name="Cargile S."/>
            <person name="Hembd A."/>
            <person name="Gonzalez A."/>
            <person name="McGrath J.M."/>
            <person name="Lloyd A.M."/>
        </authorList>
    </citation>
    <scope>NUCLEOTIDE SEQUENCE [MRNA]</scope>
    <scope>FUNCTION</scope>
    <scope>DOMAIN</scope>
    <scope>LACK OF INTERACTION WITH BHLH</scope>
    <scope>MUTAGENESIS OF 78-LYS--LYS-85 AND LYS-97</scope>
    <scope>INDUCTION</scope>
    <source>
        <strain>cv. W357B</strain>
    </source>
</reference>
<reference key="2">
    <citation type="journal article" date="2014" name="BMC Plant Biol.">
        <title>Genome-wide identification and characterisation of R2R3-MYB genes in sugar beet (Beta vulgaris).</title>
        <authorList>
            <person name="Stracke R."/>
            <person name="Holtgrawe D."/>
            <person name="Schneider J."/>
            <person name="Pucker B."/>
            <person name="Rosleff Sorensen T."/>
            <person name="Weisshaar B."/>
        </authorList>
    </citation>
    <scope>GENE FAMILY</scope>
    <scope>NOMENCLATURE</scope>
    <source>
        <strain>cv. KWS2320</strain>
    </source>
</reference>
<keyword id="KW-0010">Activator</keyword>
<keyword id="KW-0238">DNA-binding</keyword>
<keyword id="KW-0539">Nucleus</keyword>
<keyword id="KW-0677">Repeat</keyword>
<keyword id="KW-0804">Transcription</keyword>
<keyword id="KW-0805">Transcription regulation</keyword>
<evidence type="ECO:0000255" key="1">
    <source>
        <dbReference type="PROSITE-ProRule" id="PRU00625"/>
    </source>
</evidence>
<evidence type="ECO:0000269" key="2">
    <source>
    </source>
</evidence>
<evidence type="ECO:0000303" key="3">
    <source>
    </source>
</evidence>
<evidence type="ECO:0000303" key="4">
    <source>
    </source>
</evidence>
<evidence type="ECO:0000305" key="5">
    <source>
    </source>
</evidence>
<evidence type="ECO:0000312" key="6">
    <source>
        <dbReference type="EMBL" id="AET43457.1"/>
    </source>
</evidence>
<feature type="chain" id="PRO_0000431979" description="Transcription factor MYB1">
    <location>
        <begin position="1"/>
        <end position="225"/>
    </location>
</feature>
<feature type="domain" description="HTH myb-type 1" evidence="1">
    <location>
        <begin position="11"/>
        <end position="67"/>
    </location>
</feature>
<feature type="domain" description="HTH myb-type 2" evidence="1">
    <location>
        <begin position="68"/>
        <end position="118"/>
    </location>
</feature>
<feature type="DNA-binding region" description="H-T-H motif" evidence="1">
    <location>
        <begin position="39"/>
        <end position="63"/>
    </location>
</feature>
<feature type="DNA-binding region" description="H-T-H motif" evidence="1">
    <location>
        <begin position="91"/>
        <end position="114"/>
    </location>
</feature>
<feature type="mutagenesis site" description="No effect on the lack of interaction with bHLH. Strong interaction with bHLH; when associated with R-97." evidence="2">
    <original>KFIIQQHK</original>
    <variation>DLIIRLHR</variation>
    <location>
        <begin position="78"/>
        <end position="85"/>
    </location>
</feature>
<feature type="mutagenesis site" description="Strong interaction with bHLH; when associated with 78-DLIIRLHR-85." evidence="2">
    <original>K</original>
    <variation>R</variation>
    <location>
        <position position="97"/>
    </location>
</feature>
<accession>M1ETA5</accession>
<organism evidence="6">
    <name type="scientific">Beta vulgaris</name>
    <name type="common">Sugar beet</name>
    <dbReference type="NCBI Taxonomy" id="161934"/>
    <lineage>
        <taxon>Eukaryota</taxon>
        <taxon>Viridiplantae</taxon>
        <taxon>Streptophyta</taxon>
        <taxon>Embryophyta</taxon>
        <taxon>Tracheophyta</taxon>
        <taxon>Spermatophyta</taxon>
        <taxon>Magnoliopsida</taxon>
        <taxon>eudicotyledons</taxon>
        <taxon>Gunneridae</taxon>
        <taxon>Pentapetalae</taxon>
        <taxon>Caryophyllales</taxon>
        <taxon>Chenopodiaceae</taxon>
        <taxon>Betoideae</taxon>
        <taxon>Beta</taxon>
    </lineage>
</organism>
<comment type="function">
    <text>Activates DODA1 and CYP76AD1 in the betalain red pigment pathway.</text>
</comment>
<comment type="subunit">
    <text evidence="2">No interactions with bHLH.</text>
</comment>
<comment type="subcellular location">
    <subcellularLocation>
        <location evidence="1">Nucleus</location>
    </subcellularLocation>
</comment>
<comment type="induction">
    <text evidence="5">This dominant Y allele is highly expressed, resulting in an inner red flesh of the beet.</text>
</comment>
<comment type="domain">
    <text evidence="2">The C-terminus (128-225) is required for transcriptional activation.</text>
</comment>
<comment type="miscellaneous">
    <text evidence="2">Betalain and anthocyanin MYBs are not interchangeable and BvMYB1 cannot regulate the anthocyanin pathway in Arabidopsis.</text>
</comment>
<comment type="online information" name="Protein Spotlight">
    <link uri="https://www.proteinspotlight.org/back_issues/169/"/>
    <text>Another shade of red - Issue 169 of May 2015</text>
</comment>
<protein>
    <recommendedName>
        <fullName evidence="4">Transcription factor MYB1</fullName>
        <shortName evidence="4">BvMYB1</shortName>
    </recommendedName>
    <alternativeName>
        <fullName evidence="4">Anthocyanin MYB-like protein 1</fullName>
    </alternativeName>
    <alternativeName>
        <fullName evidence="4">R2R3 MYB transcriptional regulator 1</fullName>
    </alternativeName>
</protein>